<proteinExistence type="inferred from homology"/>
<keyword id="KW-0067">ATP-binding</keyword>
<keyword id="KW-0997">Cell inner membrane</keyword>
<keyword id="KW-1003">Cell membrane</keyword>
<keyword id="KW-0406">Ion transport</keyword>
<keyword id="KW-0460">Magnesium</keyword>
<keyword id="KW-0472">Membrane</keyword>
<keyword id="KW-0479">Metal-binding</keyword>
<keyword id="KW-0547">Nucleotide-binding</keyword>
<keyword id="KW-0597">Phosphoprotein</keyword>
<keyword id="KW-0630">Potassium</keyword>
<keyword id="KW-0633">Potassium transport</keyword>
<keyword id="KW-1185">Reference proteome</keyword>
<keyword id="KW-1278">Translocase</keyword>
<keyword id="KW-0812">Transmembrane</keyword>
<keyword id="KW-1133">Transmembrane helix</keyword>
<keyword id="KW-0813">Transport</keyword>
<comment type="function">
    <text evidence="1">Part of the high-affinity ATP-driven potassium transport (or Kdp) system, which catalyzes the hydrolysis of ATP coupled with the electrogenic transport of potassium into the cytoplasm. This subunit is responsible for energy coupling to the transport system and for the release of the potassium ions to the cytoplasm.</text>
</comment>
<comment type="catalytic activity">
    <reaction evidence="1">
        <text>K(+)(out) + ATP + H2O = K(+)(in) + ADP + phosphate + H(+)</text>
        <dbReference type="Rhea" id="RHEA:16777"/>
        <dbReference type="ChEBI" id="CHEBI:15377"/>
        <dbReference type="ChEBI" id="CHEBI:15378"/>
        <dbReference type="ChEBI" id="CHEBI:29103"/>
        <dbReference type="ChEBI" id="CHEBI:30616"/>
        <dbReference type="ChEBI" id="CHEBI:43474"/>
        <dbReference type="ChEBI" id="CHEBI:456216"/>
        <dbReference type="EC" id="7.2.2.6"/>
    </reaction>
    <physiologicalReaction direction="left-to-right" evidence="1">
        <dbReference type="Rhea" id="RHEA:16778"/>
    </physiologicalReaction>
</comment>
<comment type="subunit">
    <text evidence="1">The system is composed of three essential subunits: KdpA, KdpB and KdpC.</text>
</comment>
<comment type="subcellular location">
    <subcellularLocation>
        <location evidence="1">Cell inner membrane</location>
        <topology evidence="1">Multi-pass membrane protein</topology>
    </subcellularLocation>
</comment>
<comment type="similarity">
    <text evidence="1">Belongs to the cation transport ATPase (P-type) (TC 3.A.3) family. Type IA subfamily.</text>
</comment>
<gene>
    <name evidence="1" type="primary">kdpB</name>
    <name type="ordered locus">YPO2691</name>
    <name type="ordered locus">y1264</name>
    <name type="ordered locus">YP_2494</name>
</gene>
<sequence>MTHKQRAIFEPALVRTALLDAVKKLDPRVQWRNPVMFVVYLGSWLTTLIWLDILSGHTTGSAMFTGSIALWLWFTVLFANMAEALAEGRSKAQAASLRGVKKTSWAKKLSEARVDAPQEKVSADSLRKGDLVLIEAGDTVPCDGEVLEGGASVDESAITGESAPVIRESGGDFSSVTGGTRVLSDWLVVECRVNPGETFLDRMIAMVEGAKRRKTPNEVALTILLVALTIVFLLATATLYPFSVFSVEASQAGSPVTITVLVALLVCLIPTTIGGLLSAIGVAGMSRMLGANVIATSGRAVEAAGDVDVLLLDKTGTITLGNRQASEFLPAPGVTEQQLADAAQLSSLADETPEGRSIVVLAKQRFNLRERDLHSLNATFIPFSAQTRMSGVNVQERMIRKGAVDAIRRHVESNQGHFPPAVDDLVASVARTGGTPLVVAEGSRVLGVVALKDIVKGGIKERFAELRKMGIKTVMITGDNRLTAAAIAAEAGVDDFLAEATPEAKLALIRQYQAEGRLVAMTGDGTNDAPALAQADVAVAMNSGTQAAKEAGNMVDLDSNPTKLIEVVHIGKQMLMTRGSLTTFSIANDVAKYFAIIPAAFAATYPQLNALNIMQLHSPSSAILSAVIFNALVIVFLIPLALKGVSYKAMSAAALLRRNLWIYGLGGLLVPFVGIKLIDLLLTALNMG</sequence>
<dbReference type="EC" id="7.2.2.6" evidence="1"/>
<dbReference type="EMBL" id="AL590842">
    <property type="protein sequence ID" value="CAL21310.1"/>
    <property type="molecule type" value="Genomic_DNA"/>
</dbReference>
<dbReference type="EMBL" id="AE009952">
    <property type="protein sequence ID" value="AAM84838.1"/>
    <property type="molecule type" value="Genomic_DNA"/>
</dbReference>
<dbReference type="EMBL" id="AE017042">
    <property type="protein sequence ID" value="AAS62693.1"/>
    <property type="molecule type" value="Genomic_DNA"/>
</dbReference>
<dbReference type="PIR" id="AC0328">
    <property type="entry name" value="AC0328"/>
</dbReference>
<dbReference type="RefSeq" id="WP_002209651.1">
    <property type="nucleotide sequence ID" value="NZ_WUCM01000006.1"/>
</dbReference>
<dbReference type="RefSeq" id="YP_002347639.1">
    <property type="nucleotide sequence ID" value="NC_003143.1"/>
</dbReference>
<dbReference type="SMR" id="Q8ZD97"/>
<dbReference type="STRING" id="214092.YPO2691"/>
<dbReference type="PaxDb" id="214092-YPO2691"/>
<dbReference type="EnsemblBacteria" id="AAS62693">
    <property type="protein sequence ID" value="AAS62693"/>
    <property type="gene ID" value="YP_2494"/>
</dbReference>
<dbReference type="GeneID" id="57976002"/>
<dbReference type="KEGG" id="ype:YPO2691"/>
<dbReference type="KEGG" id="ypk:y1264"/>
<dbReference type="KEGG" id="ypm:YP_2494"/>
<dbReference type="PATRIC" id="fig|214092.21.peg.3129"/>
<dbReference type="eggNOG" id="COG2216">
    <property type="taxonomic scope" value="Bacteria"/>
</dbReference>
<dbReference type="HOGENOM" id="CLU_025728_2_0_6"/>
<dbReference type="OMA" id="ILWLWFT"/>
<dbReference type="OrthoDB" id="9814270at2"/>
<dbReference type="Proteomes" id="UP000000815">
    <property type="component" value="Chromosome"/>
</dbReference>
<dbReference type="Proteomes" id="UP000001019">
    <property type="component" value="Chromosome"/>
</dbReference>
<dbReference type="Proteomes" id="UP000002490">
    <property type="component" value="Chromosome"/>
</dbReference>
<dbReference type="GO" id="GO:0005886">
    <property type="term" value="C:plasma membrane"/>
    <property type="evidence" value="ECO:0000318"/>
    <property type="project" value="GO_Central"/>
</dbReference>
<dbReference type="GO" id="GO:0031004">
    <property type="term" value="C:potassium ion-transporting ATPase complex"/>
    <property type="evidence" value="ECO:0000318"/>
    <property type="project" value="GO_Central"/>
</dbReference>
<dbReference type="GO" id="GO:1903103">
    <property type="term" value="C:potassium:proton antiporter complex"/>
    <property type="evidence" value="ECO:0000318"/>
    <property type="project" value="GO_Central"/>
</dbReference>
<dbReference type="GO" id="GO:0005524">
    <property type="term" value="F:ATP binding"/>
    <property type="evidence" value="ECO:0007669"/>
    <property type="project" value="UniProtKB-UniRule"/>
</dbReference>
<dbReference type="GO" id="GO:0016887">
    <property type="term" value="F:ATP hydrolysis activity"/>
    <property type="evidence" value="ECO:0007669"/>
    <property type="project" value="InterPro"/>
</dbReference>
<dbReference type="GO" id="GO:0000287">
    <property type="term" value="F:magnesium ion binding"/>
    <property type="evidence" value="ECO:0007669"/>
    <property type="project" value="UniProtKB-UniRule"/>
</dbReference>
<dbReference type="GO" id="GO:0008556">
    <property type="term" value="F:P-type potassium transmembrane transporter activity"/>
    <property type="evidence" value="ECO:0000318"/>
    <property type="project" value="GO_Central"/>
</dbReference>
<dbReference type="GO" id="GO:0071805">
    <property type="term" value="P:potassium ion transmembrane transport"/>
    <property type="evidence" value="ECO:0000318"/>
    <property type="project" value="GO_Central"/>
</dbReference>
<dbReference type="CDD" id="cd02078">
    <property type="entry name" value="P-type_ATPase_K"/>
    <property type="match status" value="1"/>
</dbReference>
<dbReference type="FunFam" id="2.70.150.10:FF:000010">
    <property type="entry name" value="Potassium-transporting ATPase ATP-binding subunit"/>
    <property type="match status" value="1"/>
</dbReference>
<dbReference type="FunFam" id="3.40.1110.10:FF:000007">
    <property type="entry name" value="Potassium-transporting ATPase ATP-binding subunit"/>
    <property type="match status" value="1"/>
</dbReference>
<dbReference type="Gene3D" id="3.40.1110.10">
    <property type="entry name" value="Calcium-transporting ATPase, cytoplasmic domain N"/>
    <property type="match status" value="1"/>
</dbReference>
<dbReference type="Gene3D" id="2.70.150.10">
    <property type="entry name" value="Calcium-transporting ATPase, cytoplasmic transduction domain A"/>
    <property type="match status" value="1"/>
</dbReference>
<dbReference type="Gene3D" id="3.40.50.1000">
    <property type="entry name" value="HAD superfamily/HAD-like"/>
    <property type="match status" value="1"/>
</dbReference>
<dbReference type="HAMAP" id="MF_00285">
    <property type="entry name" value="KdpB"/>
    <property type="match status" value="1"/>
</dbReference>
<dbReference type="InterPro" id="IPR023299">
    <property type="entry name" value="ATPase_P-typ_cyto_dom_N"/>
</dbReference>
<dbReference type="InterPro" id="IPR018303">
    <property type="entry name" value="ATPase_P-typ_P_site"/>
</dbReference>
<dbReference type="InterPro" id="IPR023298">
    <property type="entry name" value="ATPase_P-typ_TM_dom_sf"/>
</dbReference>
<dbReference type="InterPro" id="IPR008250">
    <property type="entry name" value="ATPase_P-typ_transduc_dom_A_sf"/>
</dbReference>
<dbReference type="InterPro" id="IPR036412">
    <property type="entry name" value="HAD-like_sf"/>
</dbReference>
<dbReference type="InterPro" id="IPR023214">
    <property type="entry name" value="HAD_sf"/>
</dbReference>
<dbReference type="InterPro" id="IPR006391">
    <property type="entry name" value="P-type_ATPase_bsu_IA"/>
</dbReference>
<dbReference type="InterPro" id="IPR001757">
    <property type="entry name" value="P_typ_ATPase"/>
</dbReference>
<dbReference type="InterPro" id="IPR044492">
    <property type="entry name" value="P_typ_ATPase_HD_dom"/>
</dbReference>
<dbReference type="NCBIfam" id="TIGR01494">
    <property type="entry name" value="ATPase_P-type"/>
    <property type="match status" value="2"/>
</dbReference>
<dbReference type="NCBIfam" id="TIGR01497">
    <property type="entry name" value="kdpB"/>
    <property type="match status" value="1"/>
</dbReference>
<dbReference type="PANTHER" id="PTHR43743">
    <property type="entry name" value="POTASSIUM-TRANSPORTING ATPASE ATP-BINDING SUBUNIT"/>
    <property type="match status" value="1"/>
</dbReference>
<dbReference type="PANTHER" id="PTHR43743:SF1">
    <property type="entry name" value="POTASSIUM-TRANSPORTING ATPASE ATP-BINDING SUBUNIT"/>
    <property type="match status" value="1"/>
</dbReference>
<dbReference type="Pfam" id="PF00122">
    <property type="entry name" value="E1-E2_ATPase"/>
    <property type="match status" value="1"/>
</dbReference>
<dbReference type="Pfam" id="PF00702">
    <property type="entry name" value="Hydrolase"/>
    <property type="match status" value="1"/>
</dbReference>
<dbReference type="PRINTS" id="PR00119">
    <property type="entry name" value="CATATPASE"/>
</dbReference>
<dbReference type="SFLD" id="SFLDG00002">
    <property type="entry name" value="C1.7:_P-type_atpase_like"/>
    <property type="match status" value="1"/>
</dbReference>
<dbReference type="SFLD" id="SFLDF00027">
    <property type="entry name" value="p-type_atpase"/>
    <property type="match status" value="1"/>
</dbReference>
<dbReference type="SUPFAM" id="SSF81653">
    <property type="entry name" value="Calcium ATPase, transduction domain A"/>
    <property type="match status" value="1"/>
</dbReference>
<dbReference type="SUPFAM" id="SSF81665">
    <property type="entry name" value="Calcium ATPase, transmembrane domain M"/>
    <property type="match status" value="1"/>
</dbReference>
<dbReference type="SUPFAM" id="SSF56784">
    <property type="entry name" value="HAD-like"/>
    <property type="match status" value="1"/>
</dbReference>
<dbReference type="SUPFAM" id="SSF81660">
    <property type="entry name" value="Metal cation-transporting ATPase, ATP-binding domain N"/>
    <property type="match status" value="1"/>
</dbReference>
<dbReference type="PROSITE" id="PS00154">
    <property type="entry name" value="ATPASE_E1_E2"/>
    <property type="match status" value="1"/>
</dbReference>
<feature type="chain" id="PRO_0000046150" description="Potassium-transporting ATPase ATP-binding subunit">
    <location>
        <begin position="1"/>
        <end position="688"/>
    </location>
</feature>
<feature type="transmembrane region" description="Helical" evidence="1">
    <location>
        <begin position="34"/>
        <end position="54"/>
    </location>
</feature>
<feature type="transmembrane region" description="Helical" evidence="1">
    <location>
        <begin position="62"/>
        <end position="82"/>
    </location>
</feature>
<feature type="transmembrane region" description="Helical" evidence="1">
    <location>
        <begin position="219"/>
        <end position="239"/>
    </location>
</feature>
<feature type="transmembrane region" description="Helical" evidence="1">
    <location>
        <begin position="260"/>
        <end position="280"/>
    </location>
</feature>
<feature type="transmembrane region" description="Helical" evidence="1">
    <location>
        <begin position="594"/>
        <end position="614"/>
    </location>
</feature>
<feature type="transmembrane region" description="Helical" evidence="1">
    <location>
        <begin position="622"/>
        <end position="642"/>
    </location>
</feature>
<feature type="transmembrane region" description="Helical" evidence="1">
    <location>
        <begin position="662"/>
        <end position="682"/>
    </location>
</feature>
<feature type="active site" description="4-aspartylphosphate intermediate" evidence="1">
    <location>
        <position position="313"/>
    </location>
</feature>
<feature type="binding site" evidence="1">
    <location>
        <position position="350"/>
    </location>
    <ligand>
        <name>ATP</name>
        <dbReference type="ChEBI" id="CHEBI:30616"/>
    </ligand>
</feature>
<feature type="binding site" evidence="1">
    <location>
        <position position="354"/>
    </location>
    <ligand>
        <name>ATP</name>
        <dbReference type="ChEBI" id="CHEBI:30616"/>
    </ligand>
</feature>
<feature type="binding site" evidence="1">
    <location>
        <begin position="383"/>
        <end position="390"/>
    </location>
    <ligand>
        <name>ATP</name>
        <dbReference type="ChEBI" id="CHEBI:30616"/>
    </ligand>
</feature>
<feature type="binding site" evidence="1">
    <location>
        <position position="401"/>
    </location>
    <ligand>
        <name>ATP</name>
        <dbReference type="ChEBI" id="CHEBI:30616"/>
    </ligand>
</feature>
<feature type="binding site" evidence="1">
    <location>
        <position position="524"/>
    </location>
    <ligand>
        <name>Mg(2+)</name>
        <dbReference type="ChEBI" id="CHEBI:18420"/>
    </ligand>
</feature>
<feature type="binding site" evidence="1">
    <location>
        <position position="528"/>
    </location>
    <ligand>
        <name>Mg(2+)</name>
        <dbReference type="ChEBI" id="CHEBI:18420"/>
    </ligand>
</feature>
<organism>
    <name type="scientific">Yersinia pestis</name>
    <dbReference type="NCBI Taxonomy" id="632"/>
    <lineage>
        <taxon>Bacteria</taxon>
        <taxon>Pseudomonadati</taxon>
        <taxon>Pseudomonadota</taxon>
        <taxon>Gammaproteobacteria</taxon>
        <taxon>Enterobacterales</taxon>
        <taxon>Yersiniaceae</taxon>
        <taxon>Yersinia</taxon>
    </lineage>
</organism>
<name>KDPB_YERPE</name>
<accession>Q8ZD97</accession>
<accession>Q0WDJ9</accession>
<reference key="1">
    <citation type="journal article" date="2001" name="Nature">
        <title>Genome sequence of Yersinia pestis, the causative agent of plague.</title>
        <authorList>
            <person name="Parkhill J."/>
            <person name="Wren B.W."/>
            <person name="Thomson N.R."/>
            <person name="Titball R.W."/>
            <person name="Holden M.T.G."/>
            <person name="Prentice M.B."/>
            <person name="Sebaihia M."/>
            <person name="James K.D."/>
            <person name="Churcher C.M."/>
            <person name="Mungall K.L."/>
            <person name="Baker S."/>
            <person name="Basham D."/>
            <person name="Bentley S.D."/>
            <person name="Brooks K."/>
            <person name="Cerdeno-Tarraga A.-M."/>
            <person name="Chillingworth T."/>
            <person name="Cronin A."/>
            <person name="Davies R.M."/>
            <person name="Davis P."/>
            <person name="Dougan G."/>
            <person name="Feltwell T."/>
            <person name="Hamlin N."/>
            <person name="Holroyd S."/>
            <person name="Jagels K."/>
            <person name="Karlyshev A.V."/>
            <person name="Leather S."/>
            <person name="Moule S."/>
            <person name="Oyston P.C.F."/>
            <person name="Quail M.A."/>
            <person name="Rutherford K.M."/>
            <person name="Simmonds M."/>
            <person name="Skelton J."/>
            <person name="Stevens K."/>
            <person name="Whitehead S."/>
            <person name="Barrell B.G."/>
        </authorList>
    </citation>
    <scope>NUCLEOTIDE SEQUENCE [LARGE SCALE GENOMIC DNA]</scope>
    <source>
        <strain>CO-92 / Biovar Orientalis</strain>
    </source>
</reference>
<reference key="2">
    <citation type="journal article" date="2002" name="J. Bacteriol.">
        <title>Genome sequence of Yersinia pestis KIM.</title>
        <authorList>
            <person name="Deng W."/>
            <person name="Burland V."/>
            <person name="Plunkett G. III"/>
            <person name="Boutin A."/>
            <person name="Mayhew G.F."/>
            <person name="Liss P."/>
            <person name="Perna N.T."/>
            <person name="Rose D.J."/>
            <person name="Mau B."/>
            <person name="Zhou S."/>
            <person name="Schwartz D.C."/>
            <person name="Fetherston J.D."/>
            <person name="Lindler L.E."/>
            <person name="Brubaker R.R."/>
            <person name="Plano G.V."/>
            <person name="Straley S.C."/>
            <person name="McDonough K.A."/>
            <person name="Nilles M.L."/>
            <person name="Matson J.S."/>
            <person name="Blattner F.R."/>
            <person name="Perry R.D."/>
        </authorList>
    </citation>
    <scope>NUCLEOTIDE SEQUENCE [LARGE SCALE GENOMIC DNA]</scope>
    <source>
        <strain>KIM10+ / Biovar Mediaevalis</strain>
    </source>
</reference>
<reference key="3">
    <citation type="journal article" date="2004" name="DNA Res.">
        <title>Complete genome sequence of Yersinia pestis strain 91001, an isolate avirulent to humans.</title>
        <authorList>
            <person name="Song Y."/>
            <person name="Tong Z."/>
            <person name="Wang J."/>
            <person name="Wang L."/>
            <person name="Guo Z."/>
            <person name="Han Y."/>
            <person name="Zhang J."/>
            <person name="Pei D."/>
            <person name="Zhou D."/>
            <person name="Qin H."/>
            <person name="Pang X."/>
            <person name="Han Y."/>
            <person name="Zhai J."/>
            <person name="Li M."/>
            <person name="Cui B."/>
            <person name="Qi Z."/>
            <person name="Jin L."/>
            <person name="Dai R."/>
            <person name="Chen F."/>
            <person name="Li S."/>
            <person name="Ye C."/>
            <person name="Du Z."/>
            <person name="Lin W."/>
            <person name="Wang J."/>
            <person name="Yu J."/>
            <person name="Yang H."/>
            <person name="Wang J."/>
            <person name="Huang P."/>
            <person name="Yang R."/>
        </authorList>
    </citation>
    <scope>NUCLEOTIDE SEQUENCE [LARGE SCALE GENOMIC DNA]</scope>
    <source>
        <strain>91001 / Biovar Mediaevalis</strain>
    </source>
</reference>
<protein>
    <recommendedName>
        <fullName evidence="1">Potassium-transporting ATPase ATP-binding subunit</fullName>
        <ecNumber evidence="1">7.2.2.6</ecNumber>
    </recommendedName>
    <alternativeName>
        <fullName evidence="1">ATP phosphohydrolase [potassium-transporting] B chain</fullName>
    </alternativeName>
    <alternativeName>
        <fullName evidence="1">Potassium-binding and translocating subunit B</fullName>
    </alternativeName>
    <alternativeName>
        <fullName evidence="1">Potassium-translocating ATPase B chain</fullName>
    </alternativeName>
</protein>
<evidence type="ECO:0000255" key="1">
    <source>
        <dbReference type="HAMAP-Rule" id="MF_00285"/>
    </source>
</evidence>